<reference key="1">
    <citation type="journal article" date="2008" name="Plant Physiol.">
        <title>Arabidopsis NAD-malic enzyme functions as a homodimer and heterodimer and has a major impact on nocturnal metabolism.</title>
        <authorList>
            <person name="Tronconi M.A."/>
            <person name="Fahnenstich H."/>
            <person name="Gerrard Weehler M.C."/>
            <person name="Andreo C.S."/>
            <person name="Fluegge U.-I."/>
            <person name="Drincovich M.F."/>
            <person name="Maurino V.G."/>
        </authorList>
    </citation>
    <scope>NUCLEOTIDE SEQUENCE [MRNA]</scope>
    <scope>FUNCTION</scope>
    <scope>TISSUE SPECIFICITY</scope>
    <scope>DEVELOPMENTAL STAGE</scope>
    <scope>CATALYTIC ACTIVITY</scope>
    <scope>BIOPHYSICOCHEMICAL PROPERTIES</scope>
    <scope>SUBUNIT</scope>
    <scope>DISRUPTION PHENOTYPE</scope>
    <scope>INDUCTION BY DARKNESS</scope>
</reference>
<reference key="2">
    <citation type="journal article" date="1999" name="Nature">
        <title>Sequence and analysis of chromosome 2 of the plant Arabidopsis thaliana.</title>
        <authorList>
            <person name="Lin X."/>
            <person name="Kaul S."/>
            <person name="Rounsley S.D."/>
            <person name="Shea T.P."/>
            <person name="Benito M.-I."/>
            <person name="Town C.D."/>
            <person name="Fujii C.Y."/>
            <person name="Mason T.M."/>
            <person name="Bowman C.L."/>
            <person name="Barnstead M.E."/>
            <person name="Feldblyum T.V."/>
            <person name="Buell C.R."/>
            <person name="Ketchum K.A."/>
            <person name="Lee J.J."/>
            <person name="Ronning C.M."/>
            <person name="Koo H.L."/>
            <person name="Moffat K.S."/>
            <person name="Cronin L.A."/>
            <person name="Shen M."/>
            <person name="Pai G."/>
            <person name="Van Aken S."/>
            <person name="Umayam L."/>
            <person name="Tallon L.J."/>
            <person name="Gill J.E."/>
            <person name="Adams M.D."/>
            <person name="Carrera A.J."/>
            <person name="Creasy T.H."/>
            <person name="Goodman H.M."/>
            <person name="Somerville C.R."/>
            <person name="Copenhaver G.P."/>
            <person name="Preuss D."/>
            <person name="Nierman W.C."/>
            <person name="White O."/>
            <person name="Eisen J.A."/>
            <person name="Salzberg S.L."/>
            <person name="Fraser C.M."/>
            <person name="Venter J.C."/>
        </authorList>
    </citation>
    <scope>NUCLEOTIDE SEQUENCE [LARGE SCALE GENOMIC DNA]</scope>
    <source>
        <strain>cv. Columbia</strain>
    </source>
</reference>
<reference key="3">
    <citation type="journal article" date="2017" name="Plant J.">
        <title>Araport11: a complete reannotation of the Arabidopsis thaliana reference genome.</title>
        <authorList>
            <person name="Cheng C.Y."/>
            <person name="Krishnakumar V."/>
            <person name="Chan A.P."/>
            <person name="Thibaud-Nissen F."/>
            <person name="Schobel S."/>
            <person name="Town C.D."/>
        </authorList>
    </citation>
    <scope>GENOME REANNOTATION</scope>
    <source>
        <strain>cv. Columbia</strain>
    </source>
</reference>
<reference key="4">
    <citation type="journal article" date="2003" name="Science">
        <title>Empirical analysis of transcriptional activity in the Arabidopsis genome.</title>
        <authorList>
            <person name="Yamada K."/>
            <person name="Lim J."/>
            <person name="Dale J.M."/>
            <person name="Chen H."/>
            <person name="Shinn P."/>
            <person name="Palm C.J."/>
            <person name="Southwick A.M."/>
            <person name="Wu H.C."/>
            <person name="Kim C.J."/>
            <person name="Nguyen M."/>
            <person name="Pham P.K."/>
            <person name="Cheuk R.F."/>
            <person name="Karlin-Newmann G."/>
            <person name="Liu S.X."/>
            <person name="Lam B."/>
            <person name="Sakano H."/>
            <person name="Wu T."/>
            <person name="Yu G."/>
            <person name="Miranda M."/>
            <person name="Quach H.L."/>
            <person name="Tripp M."/>
            <person name="Chang C.H."/>
            <person name="Lee J.M."/>
            <person name="Toriumi M.J."/>
            <person name="Chan M.M."/>
            <person name="Tang C.C."/>
            <person name="Onodera C.S."/>
            <person name="Deng J.M."/>
            <person name="Akiyama K."/>
            <person name="Ansari Y."/>
            <person name="Arakawa T."/>
            <person name="Banh J."/>
            <person name="Banno F."/>
            <person name="Bowser L."/>
            <person name="Brooks S.Y."/>
            <person name="Carninci P."/>
            <person name="Chao Q."/>
            <person name="Choy N."/>
            <person name="Enju A."/>
            <person name="Goldsmith A.D."/>
            <person name="Gurjal M."/>
            <person name="Hansen N.F."/>
            <person name="Hayashizaki Y."/>
            <person name="Johnson-Hopson C."/>
            <person name="Hsuan V.W."/>
            <person name="Iida K."/>
            <person name="Karnes M."/>
            <person name="Khan S."/>
            <person name="Koesema E."/>
            <person name="Ishida J."/>
            <person name="Jiang P.X."/>
            <person name="Jones T."/>
            <person name="Kawai J."/>
            <person name="Kamiya A."/>
            <person name="Meyers C."/>
            <person name="Nakajima M."/>
            <person name="Narusaka M."/>
            <person name="Seki M."/>
            <person name="Sakurai T."/>
            <person name="Satou M."/>
            <person name="Tamse R."/>
            <person name="Vaysberg M."/>
            <person name="Wallender E.K."/>
            <person name="Wong C."/>
            <person name="Yamamura Y."/>
            <person name="Yuan S."/>
            <person name="Shinozaki K."/>
            <person name="Davis R.W."/>
            <person name="Theologis A."/>
            <person name="Ecker J.R."/>
        </authorList>
    </citation>
    <scope>NUCLEOTIDE SEQUENCE [LARGE SCALE MRNA]</scope>
    <source>
        <strain>cv. Columbia</strain>
    </source>
</reference>
<reference key="5">
    <citation type="journal article" date="2004" name="Plant Cell">
        <title>Experimental analysis of the Arabidopsis mitochondrial proteome highlights signaling and regulatory components, provides assessment of targeting prediction programs, and indicates plant-specific mitochondrial proteins.</title>
        <authorList>
            <person name="Heazlewood J.L."/>
            <person name="Tonti-Filippini J.S."/>
            <person name="Gout A.M."/>
            <person name="Day D.A."/>
            <person name="Whelan J."/>
            <person name="Millar A.H."/>
        </authorList>
    </citation>
    <scope>IDENTIFICATION BY MASS SPECTROMETRY</scope>
    <scope>SUBCELLULAR LOCATION [LARGE SCALE ANALYSIS]</scope>
    <source>
        <strain>cv. Landsberg erecta</strain>
    </source>
</reference>
<reference key="6">
    <citation type="journal article" date="2010" name="Biochem. J.">
        <title>NAD-malic enzymes of Arabidopsis thaliana display distinct kinetic mechanisms that support differences in physiological control.</title>
        <authorList>
            <person name="Tronconi M.A."/>
            <person name="Gerrard Wheeler M.C."/>
            <person name="Maurino V.G."/>
            <person name="Drincovich M.F."/>
            <person name="Andreo C.S."/>
        </authorList>
    </citation>
    <scope>SUBUNIT</scope>
    <scope>CATALYTIC ACTIVITY</scope>
</reference>
<reference key="7">
    <citation type="journal article" date="2010" name="J. Biol. Chem.">
        <title>Three different and tissue-specific NAD-malic enzymes generated by alternative subunit association in Arabidopsis thaliana.</title>
        <authorList>
            <person name="Tronconi M.A."/>
            <person name="Maurino V.G."/>
            <person name="Andreo C.S."/>
            <person name="Drincovich M.F."/>
        </authorList>
    </citation>
    <scope>TISSUE SPECIFICITY</scope>
    <scope>BIOPHYSICOCHEMICAL PROPERTIES</scope>
    <scope>DEVELOPMENTAL STAGE</scope>
    <scope>ACTIVITY REGULATION</scope>
    <scope>INTERACTION WITH NAD-ME2</scope>
    <scope>SUBUNIT</scope>
    <scope>IDENTIFICATION IN NAD-MEH COMPLEX</scope>
    <scope>SUBCELLULAR LOCATION</scope>
    <scope>GENE FAMILY</scope>
    <scope>NOMENCLATURE</scope>
</reference>
<reference key="8">
    <citation type="journal article" date="2011" name="Plant Physiol.">
        <title>Defining the protein complex proteome of plant mitochondria.</title>
        <authorList>
            <person name="Klodmann J."/>
            <person name="Senkler M."/>
            <person name="Rode C."/>
            <person name="Braun H.-P."/>
        </authorList>
    </citation>
    <scope>IDENTIFICATION BY MASS SPECTROMETRY</scope>
    <scope>SUBCELLULAR LOCATION [LARGE SCALE ANALYSIS]</scope>
</reference>
<reference key="9">
    <citation type="journal article" date="2012" name="Biochimie">
        <title>Differential fumarate binding to Arabidopsis NAD+-malic enzymes 1 and -2 produces an opposite activity modulation.</title>
        <authorList>
            <person name="Tronconi M.A."/>
            <person name="Gerrard Wheeler M.C."/>
            <person name="Drincovich M.F."/>
            <person name="Andreo C.S."/>
        </authorList>
    </citation>
    <scope>ACTIVITY REGULATION</scope>
    <scope>MUTAGENESIS OF ARG-122</scope>
</reference>
<organism>
    <name type="scientific">Arabidopsis thaliana</name>
    <name type="common">Mouse-ear cress</name>
    <dbReference type="NCBI Taxonomy" id="3702"/>
    <lineage>
        <taxon>Eukaryota</taxon>
        <taxon>Viridiplantae</taxon>
        <taxon>Streptophyta</taxon>
        <taxon>Embryophyta</taxon>
        <taxon>Tracheophyta</taxon>
        <taxon>Spermatophyta</taxon>
        <taxon>Magnoliopsida</taxon>
        <taxon>eudicotyledons</taxon>
        <taxon>Gunneridae</taxon>
        <taxon>Pentapetalae</taxon>
        <taxon>rosids</taxon>
        <taxon>malvids</taxon>
        <taxon>Brassicales</taxon>
        <taxon>Brassicaceae</taxon>
        <taxon>Camelineae</taxon>
        <taxon>Arabidopsis</taxon>
    </lineage>
</organism>
<protein>
    <recommendedName>
        <fullName>NAD-dependent malic enzyme 1, mitochondrial</fullName>
        <shortName>AtNAD-ME1</shortName>
        <shortName>NAD-malic enzyme 1</shortName>
        <ecNumber>1.1.1.39</ecNumber>
    </recommendedName>
</protein>
<gene>
    <name type="primary">NAD-ME1</name>
    <name type="ordered locus">At2g13560</name>
    <name type="ORF">T10F5.10</name>
</gene>
<sequence length="623" mass="69656">MGIANKLRLSSSSLSRILHRRILYSSAVRSFTTSEGHRPTIVHKQGLDILHDPWFNKGTAFTMTERNRLDLRGLLPPNVMDSEQQIFRFMTDLKRLEEQARDGPSDPNALAKWRILNRLHDRNETMYYKVLINNIEEYAPIVYTPTVGLVCQNYSGLFRRPRGMYFSAEDRGEMMSMVYNWPAEQVDMIVVTDGSRILGLGDLGVHGIGIAVGKLDLYVAAAGINPQRVLPVMIDVGTNNEKLRNDPMYLGLQQRRLEDDDYIDVIDEFMEAVYTRWPHVIVQFEDFQSKWAFKLLQRYRCTYRMFNDDVQGTAGVAIAGLLGAVRAQGRPMIDFPKMKIVVAGAGSAGIGVLNAARKTMARMLGNTETAFDSAQSQFWVVDAQGLITEGRENIDPEAQPFARKTKEMERQGLKEGATLVEVVREVKPDVLLGLSAVGGLFSKEVLEAMKGSTSTRPAIFAMSNPTKNAECTPQDAFSILGENMIFASGSPFKNVEFGNGHVGHCNQGNNMYLFPGIGLGTLLSGAPIVSDGMLQAASECLAAYMSEEEVLEGIIYPPISRIRDITKRIAAAVIKEAIEEDLVEGYREMDAREIQKLDEEGLMEYVENNMWNPEYPTLVYKDD</sequence>
<name>MAO1_ARATH</name>
<dbReference type="EC" id="1.1.1.39"/>
<dbReference type="EMBL" id="AC007063">
    <property type="protein sequence ID" value="AAD22679.1"/>
    <property type="molecule type" value="Genomic_DNA"/>
</dbReference>
<dbReference type="EMBL" id="CP002685">
    <property type="protein sequence ID" value="AEC06242.1"/>
    <property type="molecule type" value="Genomic_DNA"/>
</dbReference>
<dbReference type="EMBL" id="AY091108">
    <property type="protein sequence ID" value="AAM14058.1"/>
    <property type="molecule type" value="mRNA"/>
</dbReference>
<dbReference type="EMBL" id="BT000996">
    <property type="protein sequence ID" value="AAN41396.1"/>
    <property type="molecule type" value="mRNA"/>
</dbReference>
<dbReference type="PIR" id="E84508">
    <property type="entry name" value="E84508"/>
</dbReference>
<dbReference type="RefSeq" id="NP_178980.1">
    <property type="nucleotide sequence ID" value="NM_126936.4"/>
</dbReference>
<dbReference type="SMR" id="Q9SIU0"/>
<dbReference type="BioGRID" id="1203">
    <property type="interactions" value="3"/>
</dbReference>
<dbReference type="FunCoup" id="Q9SIU0">
    <property type="interactions" value="1215"/>
</dbReference>
<dbReference type="STRING" id="3702.Q9SIU0"/>
<dbReference type="MetOSite" id="Q9SIU0"/>
<dbReference type="PaxDb" id="3702-AT2G13560.1"/>
<dbReference type="ProteomicsDB" id="238877"/>
<dbReference type="EnsemblPlants" id="AT2G13560.1">
    <property type="protein sequence ID" value="AT2G13560.1"/>
    <property type="gene ID" value="AT2G13560"/>
</dbReference>
<dbReference type="GeneID" id="815842"/>
<dbReference type="Gramene" id="AT2G13560.1">
    <property type="protein sequence ID" value="AT2G13560.1"/>
    <property type="gene ID" value="AT2G13560"/>
</dbReference>
<dbReference type="KEGG" id="ath:AT2G13560"/>
<dbReference type="Araport" id="AT2G13560"/>
<dbReference type="TAIR" id="AT2G13560">
    <property type="gene designation" value="NAD-ME1"/>
</dbReference>
<dbReference type="eggNOG" id="KOG1257">
    <property type="taxonomic scope" value="Eukaryota"/>
</dbReference>
<dbReference type="HOGENOM" id="CLU_011405_5_2_1"/>
<dbReference type="InParanoid" id="Q9SIU0"/>
<dbReference type="OMA" id="AMWRILN"/>
<dbReference type="OrthoDB" id="5365701at2759"/>
<dbReference type="PhylomeDB" id="Q9SIU0"/>
<dbReference type="BioCyc" id="ARA:AT2G13560-MONOMER"/>
<dbReference type="BRENDA" id="1.1.1.39">
    <property type="organism ID" value="399"/>
</dbReference>
<dbReference type="PRO" id="PR:Q9SIU0"/>
<dbReference type="Proteomes" id="UP000006548">
    <property type="component" value="Chromosome 2"/>
</dbReference>
<dbReference type="ExpressionAtlas" id="Q9SIU0">
    <property type="expression patterns" value="baseline and differential"/>
</dbReference>
<dbReference type="GO" id="GO:0005739">
    <property type="term" value="C:mitochondrion"/>
    <property type="evidence" value="ECO:0007005"/>
    <property type="project" value="TAIR"/>
</dbReference>
<dbReference type="GO" id="GO:0005524">
    <property type="term" value="F:ATP binding"/>
    <property type="evidence" value="ECO:0007005"/>
    <property type="project" value="TAIR"/>
</dbReference>
<dbReference type="GO" id="GO:0050897">
    <property type="term" value="F:cobalt ion binding"/>
    <property type="evidence" value="ECO:0007005"/>
    <property type="project" value="TAIR"/>
</dbReference>
<dbReference type="GO" id="GO:0004471">
    <property type="term" value="F:malate dehydrogenase (decarboxylating) (NAD+) activity"/>
    <property type="evidence" value="ECO:0000314"/>
    <property type="project" value="TAIR"/>
</dbReference>
<dbReference type="GO" id="GO:0051287">
    <property type="term" value="F:NAD binding"/>
    <property type="evidence" value="ECO:0007669"/>
    <property type="project" value="InterPro"/>
</dbReference>
<dbReference type="GO" id="GO:0042803">
    <property type="term" value="F:protein homodimerization activity"/>
    <property type="evidence" value="ECO:0000314"/>
    <property type="project" value="UniProtKB"/>
</dbReference>
<dbReference type="GO" id="GO:0008270">
    <property type="term" value="F:zinc ion binding"/>
    <property type="evidence" value="ECO:0007005"/>
    <property type="project" value="TAIR"/>
</dbReference>
<dbReference type="GO" id="GO:0006108">
    <property type="term" value="P:malate metabolic process"/>
    <property type="evidence" value="ECO:0000314"/>
    <property type="project" value="TAIR"/>
</dbReference>
<dbReference type="CDD" id="cd05312">
    <property type="entry name" value="NAD_bind_1_malic_enz"/>
    <property type="match status" value="1"/>
</dbReference>
<dbReference type="FunFam" id="3.40.50.10380:FF:000005">
    <property type="entry name" value="Malic enzyme"/>
    <property type="match status" value="1"/>
</dbReference>
<dbReference type="FunFam" id="3.40.50.720:FF:000237">
    <property type="entry name" value="Malic enzyme"/>
    <property type="match status" value="1"/>
</dbReference>
<dbReference type="Gene3D" id="3.40.50.10380">
    <property type="entry name" value="Malic enzyme, N-terminal domain"/>
    <property type="match status" value="1"/>
</dbReference>
<dbReference type="Gene3D" id="3.40.50.720">
    <property type="entry name" value="NAD(P)-binding Rossmann-like Domain"/>
    <property type="match status" value="1"/>
</dbReference>
<dbReference type="InterPro" id="IPR046346">
    <property type="entry name" value="Aminoacid_DH-like_N_sf"/>
</dbReference>
<dbReference type="InterPro" id="IPR015884">
    <property type="entry name" value="Malic_enzyme_CS"/>
</dbReference>
<dbReference type="InterPro" id="IPR012301">
    <property type="entry name" value="Malic_N_dom"/>
</dbReference>
<dbReference type="InterPro" id="IPR037062">
    <property type="entry name" value="Malic_N_dom_sf"/>
</dbReference>
<dbReference type="InterPro" id="IPR012302">
    <property type="entry name" value="Malic_NAD-bd"/>
</dbReference>
<dbReference type="InterPro" id="IPR001891">
    <property type="entry name" value="Malic_OxRdtase"/>
</dbReference>
<dbReference type="InterPro" id="IPR036291">
    <property type="entry name" value="NAD(P)-bd_dom_sf"/>
</dbReference>
<dbReference type="NCBIfam" id="NF010052">
    <property type="entry name" value="PRK13529.1"/>
    <property type="match status" value="1"/>
</dbReference>
<dbReference type="PANTHER" id="PTHR23406">
    <property type="entry name" value="MALIC ENZYME-RELATED"/>
    <property type="match status" value="1"/>
</dbReference>
<dbReference type="PANTHER" id="PTHR23406:SF32">
    <property type="entry name" value="NADP-DEPENDENT MALIC ENZYME"/>
    <property type="match status" value="1"/>
</dbReference>
<dbReference type="Pfam" id="PF00390">
    <property type="entry name" value="malic"/>
    <property type="match status" value="1"/>
</dbReference>
<dbReference type="Pfam" id="PF03949">
    <property type="entry name" value="Malic_M"/>
    <property type="match status" value="1"/>
</dbReference>
<dbReference type="PIRSF" id="PIRSF000106">
    <property type="entry name" value="ME"/>
    <property type="match status" value="1"/>
</dbReference>
<dbReference type="PRINTS" id="PR00072">
    <property type="entry name" value="MALOXRDTASE"/>
</dbReference>
<dbReference type="SMART" id="SM01274">
    <property type="entry name" value="malic"/>
    <property type="match status" value="1"/>
</dbReference>
<dbReference type="SMART" id="SM00919">
    <property type="entry name" value="Malic_M"/>
    <property type="match status" value="1"/>
</dbReference>
<dbReference type="SUPFAM" id="SSF53223">
    <property type="entry name" value="Aminoacid dehydrogenase-like, N-terminal domain"/>
    <property type="match status" value="1"/>
</dbReference>
<dbReference type="SUPFAM" id="SSF51735">
    <property type="entry name" value="NAD(P)-binding Rossmann-fold domains"/>
    <property type="match status" value="1"/>
</dbReference>
<dbReference type="PROSITE" id="PS00331">
    <property type="entry name" value="MALIC_ENZYMES"/>
    <property type="match status" value="1"/>
</dbReference>
<keyword id="KW-0479">Metal-binding</keyword>
<keyword id="KW-0496">Mitochondrion</keyword>
<keyword id="KW-0520">NAD</keyword>
<keyword id="KW-0560">Oxidoreductase</keyword>
<keyword id="KW-1185">Reference proteome</keyword>
<keyword id="KW-0809">Transit peptide</keyword>
<accession>Q9SIU0</accession>
<feature type="transit peptide" description="Mitochondrion" evidence="2">
    <location>
        <begin position="1"/>
        <end position="38"/>
    </location>
</feature>
<feature type="chain" id="PRO_0000420147" description="NAD-dependent malic enzyme 1, mitochondrial">
    <location>
        <begin position="39"/>
        <end position="623"/>
    </location>
</feature>
<feature type="active site" description="Proton donor" evidence="1">
    <location>
        <position position="143"/>
    </location>
</feature>
<feature type="active site" description="Proton acceptor" evidence="1">
    <location>
        <position position="214"/>
    </location>
</feature>
<feature type="binding site" evidence="1">
    <location>
        <position position="196"/>
    </location>
    <ligand>
        <name>NAD(+)</name>
        <dbReference type="ChEBI" id="CHEBI:57540"/>
    </ligand>
</feature>
<feature type="binding site" evidence="1">
    <location>
        <position position="285"/>
    </location>
    <ligand>
        <name>a divalent metal cation</name>
        <dbReference type="ChEBI" id="CHEBI:60240"/>
    </ligand>
</feature>
<feature type="binding site" evidence="1">
    <location>
        <position position="286"/>
    </location>
    <ligand>
        <name>a divalent metal cation</name>
        <dbReference type="ChEBI" id="CHEBI:60240"/>
    </ligand>
</feature>
<feature type="binding site" evidence="1">
    <location>
        <position position="309"/>
    </location>
    <ligand>
        <name>a divalent metal cation</name>
        <dbReference type="ChEBI" id="CHEBI:60240"/>
    </ligand>
</feature>
<feature type="binding site" evidence="1">
    <location>
        <position position="309"/>
    </location>
    <ligand>
        <name>NAD(+)</name>
        <dbReference type="ChEBI" id="CHEBI:57540"/>
    </ligand>
</feature>
<feature type="binding site" evidence="1">
    <location>
        <position position="464"/>
    </location>
    <ligand>
        <name>NAD(+)</name>
        <dbReference type="ChEBI" id="CHEBI:57540"/>
    </ligand>
</feature>
<feature type="site" description="Required for fumarate-mediated allosteric activation">
    <location>
        <position position="122"/>
    </location>
</feature>
<feature type="site" description="Important for activity" evidence="1">
    <location>
        <position position="309"/>
    </location>
</feature>
<feature type="mutagenesis site" description="Impaired fumarate-mediated allosteric activation." evidence="8">
    <original>R</original>
    <variation>A</variation>
    <location>
        <position position="122"/>
    </location>
</feature>
<comment type="function">
    <text evidence="4">Involved in the regulation of sugars and amino acids metabolisms during the night period.</text>
</comment>
<comment type="catalytic activity">
    <reaction evidence="4 6">
        <text>(S)-malate + NAD(+) = pyruvate + CO2 + NADH</text>
        <dbReference type="Rhea" id="RHEA:12653"/>
        <dbReference type="ChEBI" id="CHEBI:15361"/>
        <dbReference type="ChEBI" id="CHEBI:15589"/>
        <dbReference type="ChEBI" id="CHEBI:16526"/>
        <dbReference type="ChEBI" id="CHEBI:57540"/>
        <dbReference type="ChEBI" id="CHEBI:57945"/>
        <dbReference type="EC" id="1.1.1.39"/>
    </reaction>
</comment>
<comment type="cofactor">
    <cofactor evidence="1">
        <name>Mg(2+)</name>
        <dbReference type="ChEBI" id="CHEBI:18420"/>
    </cofactor>
    <cofactor evidence="1">
        <name>Mn(2+)</name>
        <dbReference type="ChEBI" id="CHEBI:29035"/>
    </cofactor>
    <text evidence="1">Divalent metal cations. Prefers magnesium or manganese.</text>
</comment>
<comment type="activity regulation">
    <text evidence="5 8">Activated by oxaloacetate (OAA), 2-ketoglutarate, succinate and fumarate as homodimer and by OAA, 2-ketoglutarate, succinate, fumarate and coenzyme A (acetyl-CoA and CoA) as heterodimer NAD-MEH.</text>
</comment>
<comment type="biophysicochemical properties">
    <kinetics>
        <KM evidence="4 5">0.5 mM for NAD (homodimer)</KM>
        <KM evidence="4 5">0.55 mM for NAD (NAD-MEH heterodimer)</KM>
        <KM evidence="4 5">3 mM for L-malate (homodimer)</KM>
        <KM evidence="4 5">2.7 mM for L-malate (NAD-MEH heterodimer)</KM>
        <KM evidence="4 5">0.8 mM for L-malate (NAD-MEH heterodimer in the presence of coenzyme A (CoA))</KM>
        <text>kcat is 31.1 sec(-1) for the homodimer and 39 sec(-1) for the NAD-MEH heterodimer with NAD as substrate. In the presence of coenzyme A (CoA), kcat is 40.6 sec(-1) for the NAD-MEH heterodimer with NAD as substrate.</text>
    </kinetics>
    <phDependence>
        <text evidence="4 5">Optimum pH is 6.4 for homodimer and 6.5 for NAD-MEH heterodimer. In the presence of coenzyme A (CoA), optimum pH is 6.8 for NAD-MEH heterodimer.</text>
    </phDependence>
</comment>
<comment type="subunit">
    <text evidence="4 5 6">Homodimer. Heterodimer of two related subunits in NAD-MEH complex. Interacts with NAD-ME2.</text>
</comment>
<comment type="subcellular location">
    <subcellularLocation>
        <location evidence="3 5 7">Mitochondrion</location>
    </subcellularLocation>
</comment>
<comment type="tissue specificity">
    <text evidence="4 5">Expressed in leaves, stems, flowers, and roots (at protein level).</text>
</comment>
<comment type="developmental stage">
    <text evidence="4 5">In flowers, mostly present in sepals, stigmatic papillae, gynoecium (apical part) and filaments. Excluded from anthers (at protein level). In developing siliques, localized in the apical part and the abscission zone. In seedlings, expressed in cotyledons, hypocotyls, and root tip. Accumulates slowly in leaves as they mature, in the mesophyll and the cells that surround the vascular bundles.</text>
</comment>
<comment type="induction">
    <text evidence="4">Accumulates during the night period (at protein level).</text>
</comment>
<comment type="disruption phenotype">
    <text evidence="4">When associated with NAD-ME2 disruption, loss of NAD-dependent malic enzyme activity associated with an altered steady-state levels of sugars and amino acids at the end of the light period.</text>
</comment>
<comment type="similarity">
    <text evidence="9">Belongs to the malic enzymes family.</text>
</comment>
<evidence type="ECO:0000250" key="1"/>
<evidence type="ECO:0000255" key="2"/>
<evidence type="ECO:0000269" key="3">
    <source>
    </source>
</evidence>
<evidence type="ECO:0000269" key="4">
    <source>
    </source>
</evidence>
<evidence type="ECO:0000269" key="5">
    <source>
    </source>
</evidence>
<evidence type="ECO:0000269" key="6">
    <source>
    </source>
</evidence>
<evidence type="ECO:0000269" key="7">
    <source>
    </source>
</evidence>
<evidence type="ECO:0000269" key="8">
    <source>
    </source>
</evidence>
<evidence type="ECO:0000305" key="9"/>
<proteinExistence type="evidence at protein level"/>